<proteinExistence type="inferred from homology"/>
<gene>
    <name evidence="1" type="primary">rbcL</name>
</gene>
<feature type="chain" id="PRO_0000062365" description="Ribulose bisphosphate carboxylase large chain">
    <location>
        <begin position="1" status="less than"/>
        <end position="449" status="greater than"/>
    </location>
</feature>
<feature type="active site" description="Proton acceptor" evidence="1">
    <location>
        <position position="168"/>
    </location>
</feature>
<feature type="active site" description="Proton acceptor" evidence="1">
    <location>
        <position position="287"/>
    </location>
</feature>
<feature type="binding site" description="in homodimeric partner" evidence="1">
    <location>
        <position position="116"/>
    </location>
    <ligand>
        <name>substrate</name>
    </ligand>
</feature>
<feature type="binding site" evidence="1">
    <location>
        <position position="166"/>
    </location>
    <ligand>
        <name>substrate</name>
    </ligand>
</feature>
<feature type="binding site" evidence="1">
    <location>
        <position position="170"/>
    </location>
    <ligand>
        <name>substrate</name>
    </ligand>
</feature>
<feature type="binding site" description="via carbamate group" evidence="1">
    <location>
        <position position="194"/>
    </location>
    <ligand>
        <name>Mg(2+)</name>
        <dbReference type="ChEBI" id="CHEBI:18420"/>
    </ligand>
</feature>
<feature type="binding site" evidence="1">
    <location>
        <position position="196"/>
    </location>
    <ligand>
        <name>Mg(2+)</name>
        <dbReference type="ChEBI" id="CHEBI:18420"/>
    </ligand>
</feature>
<feature type="binding site" evidence="1">
    <location>
        <position position="197"/>
    </location>
    <ligand>
        <name>Mg(2+)</name>
        <dbReference type="ChEBI" id="CHEBI:18420"/>
    </ligand>
</feature>
<feature type="binding site" evidence="1">
    <location>
        <position position="288"/>
    </location>
    <ligand>
        <name>substrate</name>
    </ligand>
</feature>
<feature type="binding site" evidence="1">
    <location>
        <position position="320"/>
    </location>
    <ligand>
        <name>substrate</name>
    </ligand>
</feature>
<feature type="binding site" evidence="1">
    <location>
        <position position="372"/>
    </location>
    <ligand>
        <name>substrate</name>
    </ligand>
</feature>
<feature type="site" description="Transition state stabilizer" evidence="1">
    <location>
        <position position="327"/>
    </location>
</feature>
<feature type="modified residue" description="N6,N6,N6-trimethyllysine" evidence="1">
    <location>
        <position position="7"/>
    </location>
</feature>
<feature type="modified residue" description="N6-carboxylysine" evidence="1">
    <location>
        <position position="194"/>
    </location>
</feature>
<feature type="disulfide bond" description="Interchain; in linked form" evidence="1">
    <location>
        <position position="240"/>
    </location>
</feature>
<feature type="non-terminal residue">
    <location>
        <position position="1"/>
    </location>
</feature>
<feature type="non-terminal residue">
    <location>
        <position position="449"/>
    </location>
</feature>
<protein>
    <recommendedName>
        <fullName evidence="1">Ribulose bisphosphate carboxylase large chain</fullName>
        <shortName evidence="1">RuBisCO large subunit</shortName>
        <ecNumber evidence="1">4.1.1.39</ecNumber>
    </recommendedName>
</protein>
<sequence length="449" mass="49800">KASVGFKAGVKDYRLTYYTPDYETKDTDILAAFRVTPQPGVPAEEAGAAVAAESSTGTWTTVWTDGLTSLDRYKGRCYHIEAVVGEENQYICYVAYPLDLFEEGSVTNMFTSIVGNVFGFKALRALRLEDLRIPPAYSKTFQGPPHGIQVERDKLNKYGRPLLGCTIKPKLGLSAKNYGRAVYECLRGGLDFTKDDENVNSQPFMRWRDRFVFCAEAIYKAQAETGEIKGHYLNATAGTCEEMMKRVTFARELGAPIVMHDYLTGGFTANTTLAHYCRDNGLLLHIHRAMHAVIDRQKNHGMHFRVLAKALRMSGGDHIHAGTVVGKLEGEREMTLGFVDLLRDDFIEKDRRRGIFFTQDWVSMPGVIPVASGGIHVWHMPALTEIFGDDSVLQFGGGTIGHPWGNAPGAVANRVALEACVQARNEGRDLAREGNEIIREAAKWSPELA</sequence>
<keyword id="KW-0113">Calvin cycle</keyword>
<keyword id="KW-0120">Carbon dioxide fixation</keyword>
<keyword id="KW-0150">Chloroplast</keyword>
<keyword id="KW-1015">Disulfide bond</keyword>
<keyword id="KW-0456">Lyase</keyword>
<keyword id="KW-0460">Magnesium</keyword>
<keyword id="KW-0479">Metal-binding</keyword>
<keyword id="KW-0488">Methylation</keyword>
<keyword id="KW-0503">Monooxygenase</keyword>
<keyword id="KW-0560">Oxidoreductase</keyword>
<keyword id="KW-0601">Photorespiration</keyword>
<keyword id="KW-0602">Photosynthesis</keyword>
<keyword id="KW-0934">Plastid</keyword>
<accession>P92445</accession>
<geneLocation type="chloroplast"/>
<organism>
    <name type="scientific">Aspidistra elatior</name>
    <name type="common">Cast-iron plant</name>
    <name type="synonym">Barroom plant</name>
    <dbReference type="NCBI Taxonomy" id="39526"/>
    <lineage>
        <taxon>Eukaryota</taxon>
        <taxon>Viridiplantae</taxon>
        <taxon>Streptophyta</taxon>
        <taxon>Embryophyta</taxon>
        <taxon>Tracheophyta</taxon>
        <taxon>Spermatophyta</taxon>
        <taxon>Magnoliopsida</taxon>
        <taxon>Liliopsida</taxon>
        <taxon>Asparagales</taxon>
        <taxon>Asparagaceae</taxon>
        <taxon>Nolinoideae</taxon>
        <taxon>Aspidistra</taxon>
    </lineage>
</organism>
<reference key="1">
    <citation type="submission" date="1996-07" db="EMBL/GenBank/DDBJ databases">
        <authorList>
            <person name="Rudall P.J."/>
            <person name="Furness C.A."/>
            <person name="Fay M.F."/>
            <person name="Chase M.W."/>
        </authorList>
    </citation>
    <scope>NUCLEOTIDE SEQUENCE [GENOMIC DNA]</scope>
    <source>
        <tissue>Leaf</tissue>
    </source>
</reference>
<evidence type="ECO:0000255" key="1">
    <source>
        <dbReference type="HAMAP-Rule" id="MF_01338"/>
    </source>
</evidence>
<comment type="function">
    <text evidence="1">RuBisCO catalyzes two reactions: the carboxylation of D-ribulose 1,5-bisphosphate, the primary event in carbon dioxide fixation, as well as the oxidative fragmentation of the pentose substrate in the photorespiration process. Both reactions occur simultaneously and in competition at the same active site.</text>
</comment>
<comment type="catalytic activity">
    <reaction evidence="1">
        <text>2 (2R)-3-phosphoglycerate + 2 H(+) = D-ribulose 1,5-bisphosphate + CO2 + H2O</text>
        <dbReference type="Rhea" id="RHEA:23124"/>
        <dbReference type="ChEBI" id="CHEBI:15377"/>
        <dbReference type="ChEBI" id="CHEBI:15378"/>
        <dbReference type="ChEBI" id="CHEBI:16526"/>
        <dbReference type="ChEBI" id="CHEBI:57870"/>
        <dbReference type="ChEBI" id="CHEBI:58272"/>
        <dbReference type="EC" id="4.1.1.39"/>
    </reaction>
</comment>
<comment type="catalytic activity">
    <reaction evidence="1">
        <text>D-ribulose 1,5-bisphosphate + O2 = 2-phosphoglycolate + (2R)-3-phosphoglycerate + 2 H(+)</text>
        <dbReference type="Rhea" id="RHEA:36631"/>
        <dbReference type="ChEBI" id="CHEBI:15378"/>
        <dbReference type="ChEBI" id="CHEBI:15379"/>
        <dbReference type="ChEBI" id="CHEBI:57870"/>
        <dbReference type="ChEBI" id="CHEBI:58033"/>
        <dbReference type="ChEBI" id="CHEBI:58272"/>
    </reaction>
</comment>
<comment type="cofactor">
    <cofactor evidence="1">
        <name>Mg(2+)</name>
        <dbReference type="ChEBI" id="CHEBI:18420"/>
    </cofactor>
    <text evidence="1">Binds 1 Mg(2+) ion per subunit.</text>
</comment>
<comment type="subunit">
    <text evidence="1">Heterohexadecamer of 8 large chains and 8 small chains; disulfide-linked. The disulfide link is formed within the large subunit homodimers.</text>
</comment>
<comment type="subcellular location">
    <subcellularLocation>
        <location>Plastid</location>
        <location>Chloroplast</location>
    </subcellularLocation>
</comment>
<comment type="PTM">
    <text evidence="1">The disulfide bond which can form in the large chain dimeric partners within the hexadecamer appears to be associated with oxidative stress and protein turnover.</text>
</comment>
<comment type="miscellaneous">
    <text evidence="1">The basic functional RuBisCO is composed of a large chain homodimer in a 'head-to-tail' conformation. In form I RuBisCO this homodimer is arranged in a barrel-like tetramer with the small subunits forming a tetrameric 'cap' on each end of the 'barrel'.</text>
</comment>
<comment type="similarity">
    <text evidence="1">Belongs to the RuBisCO large chain family. Type I subfamily.</text>
</comment>
<name>RBL_ASPEL</name>
<dbReference type="EC" id="4.1.1.39" evidence="1"/>
<dbReference type="EMBL" id="Z77269">
    <property type="protein sequence ID" value="CAB01069.1"/>
    <property type="molecule type" value="Genomic_DNA"/>
</dbReference>
<dbReference type="SMR" id="P92445"/>
<dbReference type="GO" id="GO:0009507">
    <property type="term" value="C:chloroplast"/>
    <property type="evidence" value="ECO:0007669"/>
    <property type="project" value="UniProtKB-SubCell"/>
</dbReference>
<dbReference type="GO" id="GO:0000287">
    <property type="term" value="F:magnesium ion binding"/>
    <property type="evidence" value="ECO:0007669"/>
    <property type="project" value="InterPro"/>
</dbReference>
<dbReference type="GO" id="GO:0004497">
    <property type="term" value="F:monooxygenase activity"/>
    <property type="evidence" value="ECO:0007669"/>
    <property type="project" value="UniProtKB-KW"/>
</dbReference>
<dbReference type="GO" id="GO:0016984">
    <property type="term" value="F:ribulose-bisphosphate carboxylase activity"/>
    <property type="evidence" value="ECO:0007669"/>
    <property type="project" value="UniProtKB-EC"/>
</dbReference>
<dbReference type="GO" id="GO:0009853">
    <property type="term" value="P:photorespiration"/>
    <property type="evidence" value="ECO:0007669"/>
    <property type="project" value="UniProtKB-KW"/>
</dbReference>
<dbReference type="GO" id="GO:0019253">
    <property type="term" value="P:reductive pentose-phosphate cycle"/>
    <property type="evidence" value="ECO:0007669"/>
    <property type="project" value="UniProtKB-KW"/>
</dbReference>
<dbReference type="CDD" id="cd08212">
    <property type="entry name" value="RuBisCO_large_I"/>
    <property type="match status" value="1"/>
</dbReference>
<dbReference type="FunFam" id="3.20.20.110:FF:000001">
    <property type="entry name" value="Ribulose bisphosphate carboxylase large chain"/>
    <property type="match status" value="1"/>
</dbReference>
<dbReference type="FunFam" id="3.30.70.150:FF:000001">
    <property type="entry name" value="Ribulose bisphosphate carboxylase large chain"/>
    <property type="match status" value="1"/>
</dbReference>
<dbReference type="Gene3D" id="3.20.20.110">
    <property type="entry name" value="Ribulose bisphosphate carboxylase, large subunit, C-terminal domain"/>
    <property type="match status" value="1"/>
</dbReference>
<dbReference type="Gene3D" id="3.30.70.150">
    <property type="entry name" value="RuBisCO large subunit, N-terminal domain"/>
    <property type="match status" value="1"/>
</dbReference>
<dbReference type="HAMAP" id="MF_01338">
    <property type="entry name" value="RuBisCO_L_type1"/>
    <property type="match status" value="1"/>
</dbReference>
<dbReference type="InterPro" id="IPR033966">
    <property type="entry name" value="RuBisCO"/>
</dbReference>
<dbReference type="InterPro" id="IPR020878">
    <property type="entry name" value="RuBisCo_large_chain_AS"/>
</dbReference>
<dbReference type="InterPro" id="IPR000685">
    <property type="entry name" value="RuBisCO_lsu_C"/>
</dbReference>
<dbReference type="InterPro" id="IPR036376">
    <property type="entry name" value="RuBisCO_lsu_C_sf"/>
</dbReference>
<dbReference type="InterPro" id="IPR017443">
    <property type="entry name" value="RuBisCO_lsu_fd_N"/>
</dbReference>
<dbReference type="InterPro" id="IPR036422">
    <property type="entry name" value="RuBisCO_lsu_N_sf"/>
</dbReference>
<dbReference type="InterPro" id="IPR020888">
    <property type="entry name" value="RuBisCO_lsuI"/>
</dbReference>
<dbReference type="NCBIfam" id="NF003252">
    <property type="entry name" value="PRK04208.1"/>
    <property type="match status" value="1"/>
</dbReference>
<dbReference type="PANTHER" id="PTHR42704">
    <property type="entry name" value="RIBULOSE BISPHOSPHATE CARBOXYLASE"/>
    <property type="match status" value="1"/>
</dbReference>
<dbReference type="PANTHER" id="PTHR42704:SF15">
    <property type="entry name" value="RIBULOSE BISPHOSPHATE CARBOXYLASE LARGE CHAIN"/>
    <property type="match status" value="1"/>
</dbReference>
<dbReference type="Pfam" id="PF00016">
    <property type="entry name" value="RuBisCO_large"/>
    <property type="match status" value="1"/>
</dbReference>
<dbReference type="Pfam" id="PF02788">
    <property type="entry name" value="RuBisCO_large_N"/>
    <property type="match status" value="1"/>
</dbReference>
<dbReference type="SFLD" id="SFLDG01052">
    <property type="entry name" value="RuBisCO"/>
    <property type="match status" value="1"/>
</dbReference>
<dbReference type="SFLD" id="SFLDS00014">
    <property type="entry name" value="RuBisCO"/>
    <property type="match status" value="1"/>
</dbReference>
<dbReference type="SFLD" id="SFLDG00301">
    <property type="entry name" value="RuBisCO-like_proteins"/>
    <property type="match status" value="1"/>
</dbReference>
<dbReference type="SUPFAM" id="SSF51649">
    <property type="entry name" value="RuBisCo, C-terminal domain"/>
    <property type="match status" value="1"/>
</dbReference>
<dbReference type="SUPFAM" id="SSF54966">
    <property type="entry name" value="RuBisCO, large subunit, small (N-terminal) domain"/>
    <property type="match status" value="1"/>
</dbReference>
<dbReference type="PROSITE" id="PS00157">
    <property type="entry name" value="RUBISCO_LARGE"/>
    <property type="match status" value="1"/>
</dbReference>